<reference key="1">
    <citation type="journal article" date="1992" name="J. Mol. Biol.">
        <title>Sequences of 20 subunits of NADH:ubiquinone oxidoreductase from bovine heart mitochondria. Application of a novel strategy for sequencing proteins using the polymerase chain reaction.</title>
        <authorList>
            <person name="Walker J.E."/>
            <person name="Arizmendi J.M."/>
            <person name="Dupuis A."/>
            <person name="Fearnley I.M."/>
            <person name="Finel M."/>
            <person name="Medd S.M."/>
            <person name="Pilkington S.J."/>
            <person name="Runswick M.J."/>
            <person name="Skehel J.M."/>
        </authorList>
    </citation>
    <scope>NUCLEOTIDE SEQUENCE [MRNA]</scope>
    <scope>PROTEIN SEQUENCE OF 37-65</scope>
    <source>
        <tissue>Heart</tissue>
    </source>
</reference>
<reference key="2">
    <citation type="submission" date="2005-11" db="EMBL/GenBank/DDBJ databases">
        <authorList>
            <consortium name="NIH - Mammalian Gene Collection (MGC) project"/>
        </authorList>
    </citation>
    <scope>NUCLEOTIDE SEQUENCE [LARGE SCALE MRNA]</scope>
    <source>
        <strain>Crossbred X Angus</strain>
        <tissue>Liver</tissue>
    </source>
</reference>
<reference key="3">
    <citation type="journal article" date="2000" name="Biochemistry">
        <title>Resolution of the membrane domain of bovine complex I into subcomplexes: implications for the structural organization of the enzyme.</title>
        <authorList>
            <person name="Sazanov L.A."/>
            <person name="Peak-Chew S.Y."/>
            <person name="Fearnley I.M."/>
            <person name="Walker J.E."/>
        </authorList>
    </citation>
    <scope>PARTIAL PROTEIN SEQUENCE</scope>
    <scope>SUBUNIT</scope>
    <scope>IDENTIFICATION IN COMPLEX I</scope>
    <scope>SUBCELLULAR LOCATION</scope>
</reference>
<reference key="4">
    <citation type="journal article" date="2008" name="Anal. Biochem.">
        <title>Subunit analysis of bovine heart complex I by reversed-phase high-performance liquid chromatography, electrospray ionization-tandem mass spectrometry, and matrix-assisted laser desorption/ionization-time-of-flight mass spectrometry.</title>
        <authorList>
            <person name="Lemma-Gray P."/>
            <person name="Valusova E."/>
            <person name="Carroll C.A."/>
            <person name="Weintraub S.T."/>
            <person name="Musatov A."/>
            <person name="Robinson N.C."/>
        </authorList>
    </citation>
    <scope>SUBUNIT</scope>
    <scope>IDENTIFICATION IN COMPLEX I</scope>
    <scope>SUBCELLULAR LOCATION</scope>
</reference>
<name>NDUB2_BOVIN</name>
<sequence length="108" mass="12282">MAGMSALKRLAPFAHVGGHLFRGRCARAAGARGVRRAGGGAHIEPRYRQFPQLTRSQVIQAEFFSATMWFWILWRFWHDSDAVLGHFPYPDPSQWTDEELGIPPDDED</sequence>
<comment type="function">
    <text evidence="1">Accessory subunit of the mitochondrial membrane respiratory chain NADH dehydrogenase (Complex I), that is believed not to be involved in catalysis. Complex I functions in the transfer of electrons from NADH to the respiratory chain. The immediate electron acceptor for the enzyme is believed to be ubiquinone.</text>
</comment>
<comment type="subunit">
    <text evidence="3 4 5">Complex I is composed of 45 different subunits.</text>
</comment>
<comment type="subcellular location">
    <subcellularLocation>
        <location evidence="7 8">Mitochondrion inner membrane</location>
        <topology evidence="6">Peripheral membrane protein</topology>
        <orientation evidence="6">Matrix side</orientation>
    </subcellularLocation>
</comment>
<comment type="similarity">
    <text evidence="6">Belongs to the complex I NDUFB2 subunit family.</text>
</comment>
<dbReference type="EMBL" id="X63216">
    <property type="protein sequence ID" value="CAA44901.1"/>
    <property type="molecule type" value="mRNA"/>
</dbReference>
<dbReference type="EMBL" id="BC109777">
    <property type="protein sequence ID" value="AAI09778.1"/>
    <property type="molecule type" value="mRNA"/>
</dbReference>
<dbReference type="PIR" id="S28241">
    <property type="entry name" value="S28241"/>
</dbReference>
<dbReference type="RefSeq" id="NP_787022.1">
    <property type="nucleotide sequence ID" value="NM_175828.2"/>
</dbReference>
<dbReference type="RefSeq" id="XP_059741397.1">
    <property type="nucleotide sequence ID" value="XM_059885414.1"/>
</dbReference>
<dbReference type="PDB" id="7DGQ">
    <property type="method" value="EM"/>
    <property type="resolution" value="5.00 A"/>
    <property type="chains" value="Y=37-108"/>
</dbReference>
<dbReference type="PDB" id="7DGR">
    <property type="method" value="EM"/>
    <property type="resolution" value="4.60 A"/>
    <property type="chains" value="Y=37-108"/>
</dbReference>
<dbReference type="PDB" id="7DGS">
    <property type="method" value="EM"/>
    <property type="resolution" value="7.80 A"/>
    <property type="chains" value="Y=37-108"/>
</dbReference>
<dbReference type="PDB" id="7DGZ">
    <property type="method" value="EM"/>
    <property type="resolution" value="3.80 A"/>
    <property type="chains" value="Y=37-108"/>
</dbReference>
<dbReference type="PDB" id="7DH0">
    <property type="method" value="EM"/>
    <property type="resolution" value="4.20 A"/>
    <property type="chains" value="Y=37-108"/>
</dbReference>
<dbReference type="PDB" id="7DKF">
    <property type="method" value="EM"/>
    <property type="resolution" value="8.30 A"/>
    <property type="chains" value="Y2=37-108"/>
</dbReference>
<dbReference type="PDB" id="7QSD">
    <property type="method" value="EM"/>
    <property type="resolution" value="3.10 A"/>
    <property type="chains" value="j=1-108"/>
</dbReference>
<dbReference type="PDB" id="7QSK">
    <property type="method" value="EM"/>
    <property type="resolution" value="2.84 A"/>
    <property type="chains" value="j=1-108"/>
</dbReference>
<dbReference type="PDB" id="7QSL">
    <property type="method" value="EM"/>
    <property type="resolution" value="2.76 A"/>
    <property type="chains" value="j=1-108"/>
</dbReference>
<dbReference type="PDB" id="7QSM">
    <property type="method" value="EM"/>
    <property type="resolution" value="2.30 A"/>
    <property type="chains" value="j=1-108"/>
</dbReference>
<dbReference type="PDB" id="7QSN">
    <property type="method" value="EM"/>
    <property type="resolution" value="2.81 A"/>
    <property type="chains" value="j=1-108"/>
</dbReference>
<dbReference type="PDB" id="7QSO">
    <property type="method" value="EM"/>
    <property type="resolution" value="3.02 A"/>
    <property type="chains" value="j=1-108"/>
</dbReference>
<dbReference type="PDB" id="7R41">
    <property type="method" value="EM"/>
    <property type="resolution" value="2.30 A"/>
    <property type="chains" value="j=1-108"/>
</dbReference>
<dbReference type="PDB" id="7R42">
    <property type="method" value="EM"/>
    <property type="resolution" value="2.30 A"/>
    <property type="chains" value="j=1-108"/>
</dbReference>
<dbReference type="PDB" id="7R43">
    <property type="method" value="EM"/>
    <property type="resolution" value="2.40 A"/>
    <property type="chains" value="j=1-108"/>
</dbReference>
<dbReference type="PDB" id="7R44">
    <property type="method" value="EM"/>
    <property type="resolution" value="2.40 A"/>
    <property type="chains" value="j=1-108"/>
</dbReference>
<dbReference type="PDB" id="7R45">
    <property type="method" value="EM"/>
    <property type="resolution" value="2.40 A"/>
    <property type="chains" value="j=1-108"/>
</dbReference>
<dbReference type="PDB" id="7R46">
    <property type="method" value="EM"/>
    <property type="resolution" value="2.40 A"/>
    <property type="chains" value="j=1-108"/>
</dbReference>
<dbReference type="PDB" id="7R47">
    <property type="method" value="EM"/>
    <property type="resolution" value="2.30 A"/>
    <property type="chains" value="j=1-108"/>
</dbReference>
<dbReference type="PDB" id="7R48">
    <property type="method" value="EM"/>
    <property type="resolution" value="2.30 A"/>
    <property type="chains" value="j=1-108"/>
</dbReference>
<dbReference type="PDB" id="7R4C">
    <property type="method" value="EM"/>
    <property type="resolution" value="2.30 A"/>
    <property type="chains" value="j=1-108"/>
</dbReference>
<dbReference type="PDB" id="7R4D">
    <property type="method" value="EM"/>
    <property type="resolution" value="2.30 A"/>
    <property type="chains" value="j=1-108"/>
</dbReference>
<dbReference type="PDB" id="7R4F">
    <property type="method" value="EM"/>
    <property type="resolution" value="2.40 A"/>
    <property type="chains" value="j=1-108"/>
</dbReference>
<dbReference type="PDB" id="7R4G">
    <property type="method" value="EM"/>
    <property type="resolution" value="2.50 A"/>
    <property type="chains" value="j=1-108"/>
</dbReference>
<dbReference type="PDB" id="8Q0A">
    <property type="method" value="EM"/>
    <property type="resolution" value="3.10 A"/>
    <property type="chains" value="j=1-108"/>
</dbReference>
<dbReference type="PDB" id="8Q0F">
    <property type="method" value="EM"/>
    <property type="resolution" value="3.10 A"/>
    <property type="chains" value="j=1-108"/>
</dbReference>
<dbReference type="PDB" id="8Q0J">
    <property type="method" value="EM"/>
    <property type="resolution" value="3.80 A"/>
    <property type="chains" value="j=1-108"/>
</dbReference>
<dbReference type="PDB" id="8Q0M">
    <property type="method" value="EM"/>
    <property type="resolution" value="3.10 A"/>
    <property type="chains" value="j=1-108"/>
</dbReference>
<dbReference type="PDB" id="8Q0O">
    <property type="method" value="EM"/>
    <property type="resolution" value="3.10 A"/>
    <property type="chains" value="j=1-108"/>
</dbReference>
<dbReference type="PDB" id="8Q0Q">
    <property type="method" value="EM"/>
    <property type="resolution" value="3.60 A"/>
    <property type="chains" value="j=1-108"/>
</dbReference>
<dbReference type="PDB" id="8Q1P">
    <property type="method" value="EM"/>
    <property type="resolution" value="2.90 A"/>
    <property type="chains" value="j=1-108"/>
</dbReference>
<dbReference type="PDB" id="8Q1U">
    <property type="method" value="EM"/>
    <property type="resolution" value="3.30 A"/>
    <property type="chains" value="j=1-108"/>
</dbReference>
<dbReference type="PDB" id="8Q1Y">
    <property type="method" value="EM"/>
    <property type="resolution" value="2.60 A"/>
    <property type="chains" value="j=1-108"/>
</dbReference>
<dbReference type="PDB" id="8Q25">
    <property type="method" value="EM"/>
    <property type="resolution" value="2.80 A"/>
    <property type="chains" value="j=1-108"/>
</dbReference>
<dbReference type="PDB" id="8Q45">
    <property type="method" value="EM"/>
    <property type="resolution" value="2.70 A"/>
    <property type="chains" value="j=1-108"/>
</dbReference>
<dbReference type="PDB" id="8Q46">
    <property type="method" value="EM"/>
    <property type="resolution" value="2.60 A"/>
    <property type="chains" value="j=1-108"/>
</dbReference>
<dbReference type="PDB" id="8Q47">
    <property type="method" value="EM"/>
    <property type="resolution" value="2.90 A"/>
    <property type="chains" value="j=1-108"/>
</dbReference>
<dbReference type="PDB" id="8Q48">
    <property type="method" value="EM"/>
    <property type="resolution" value="2.50 A"/>
    <property type="chains" value="j=1-108"/>
</dbReference>
<dbReference type="PDB" id="8Q49">
    <property type="method" value="EM"/>
    <property type="resolution" value="2.60 A"/>
    <property type="chains" value="j=1-108"/>
</dbReference>
<dbReference type="PDB" id="8Q4A">
    <property type="method" value="EM"/>
    <property type="resolution" value="2.60 A"/>
    <property type="chains" value="j=1-108"/>
</dbReference>
<dbReference type="PDBsum" id="7DGQ"/>
<dbReference type="PDBsum" id="7DGR"/>
<dbReference type="PDBsum" id="7DGS"/>
<dbReference type="PDBsum" id="7DGZ"/>
<dbReference type="PDBsum" id="7DH0"/>
<dbReference type="PDBsum" id="7DKF"/>
<dbReference type="PDBsum" id="7QSD"/>
<dbReference type="PDBsum" id="7QSK"/>
<dbReference type="PDBsum" id="7QSL"/>
<dbReference type="PDBsum" id="7QSM"/>
<dbReference type="PDBsum" id="7QSN"/>
<dbReference type="PDBsum" id="7QSO"/>
<dbReference type="PDBsum" id="7R41"/>
<dbReference type="PDBsum" id="7R42"/>
<dbReference type="PDBsum" id="7R43"/>
<dbReference type="PDBsum" id="7R44"/>
<dbReference type="PDBsum" id="7R45"/>
<dbReference type="PDBsum" id="7R46"/>
<dbReference type="PDBsum" id="7R47"/>
<dbReference type="PDBsum" id="7R48"/>
<dbReference type="PDBsum" id="7R4C"/>
<dbReference type="PDBsum" id="7R4D"/>
<dbReference type="PDBsum" id="7R4F"/>
<dbReference type="PDBsum" id="7R4G"/>
<dbReference type="PDBsum" id="8Q0A"/>
<dbReference type="PDBsum" id="8Q0F"/>
<dbReference type="PDBsum" id="8Q0J"/>
<dbReference type="PDBsum" id="8Q0M"/>
<dbReference type="PDBsum" id="8Q0O"/>
<dbReference type="PDBsum" id="8Q0Q"/>
<dbReference type="PDBsum" id="8Q1P"/>
<dbReference type="PDBsum" id="8Q1U"/>
<dbReference type="PDBsum" id="8Q1Y"/>
<dbReference type="PDBsum" id="8Q25"/>
<dbReference type="PDBsum" id="8Q45"/>
<dbReference type="PDBsum" id="8Q46"/>
<dbReference type="PDBsum" id="8Q47"/>
<dbReference type="PDBsum" id="8Q48"/>
<dbReference type="PDBsum" id="8Q49"/>
<dbReference type="PDBsum" id="8Q4A"/>
<dbReference type="EMDB" id="EMD-14127"/>
<dbReference type="EMDB" id="EMD-14132"/>
<dbReference type="EMDB" id="EMD-14133"/>
<dbReference type="EMDB" id="EMD-14134"/>
<dbReference type="EMDB" id="EMD-14139"/>
<dbReference type="EMDB" id="EMD-14140"/>
<dbReference type="EMDB" id="EMD-14251"/>
<dbReference type="EMDB" id="EMD-14256"/>
<dbReference type="EMDB" id="EMD-14261"/>
<dbReference type="EMDB" id="EMD-14266"/>
<dbReference type="EMDB" id="EMD-14272"/>
<dbReference type="EMDB" id="EMD-14277"/>
<dbReference type="EMDB" id="EMD-14282"/>
<dbReference type="EMDB" id="EMD-14287"/>
<dbReference type="EMDB" id="EMD-14292"/>
<dbReference type="EMDB" id="EMD-14297"/>
<dbReference type="EMDB" id="EMD-14302"/>
<dbReference type="EMDB" id="EMD-14307"/>
<dbReference type="EMDB" id="EMD-18051"/>
<dbReference type="EMDB" id="EMD-18052"/>
<dbReference type="EMDB" id="EMD-18054"/>
<dbReference type="EMDB" id="EMD-18055"/>
<dbReference type="EMDB" id="EMD-18057"/>
<dbReference type="EMDB" id="EMD-18059"/>
<dbReference type="EMDB" id="EMD-18066"/>
<dbReference type="EMDB" id="EMD-18067"/>
<dbReference type="EMDB" id="EMD-18068"/>
<dbReference type="EMDB" id="EMD-18069"/>
<dbReference type="EMDB" id="EMD-18138"/>
<dbReference type="EMDB" id="EMD-18139"/>
<dbReference type="EMDB" id="EMD-18140"/>
<dbReference type="EMDB" id="EMD-18141"/>
<dbReference type="EMDB" id="EMD-18142"/>
<dbReference type="EMDB" id="EMD-18143"/>
<dbReference type="EMDB" id="EMD-30673"/>
<dbReference type="EMDB" id="EMD-30674"/>
<dbReference type="EMDB" id="EMD-30675"/>
<dbReference type="EMDB" id="EMD-30676"/>
<dbReference type="EMDB" id="EMD-30677"/>
<dbReference type="EMDB" id="EMD-30706"/>
<dbReference type="SMR" id="Q02374"/>
<dbReference type="CORUM" id="Q02374"/>
<dbReference type="DIP" id="DIP-38812N"/>
<dbReference type="FunCoup" id="Q02374">
    <property type="interactions" value="1161"/>
</dbReference>
<dbReference type="IntAct" id="Q02374">
    <property type="interactions" value="1"/>
</dbReference>
<dbReference type="STRING" id="9913.ENSBTAP00000029003"/>
<dbReference type="TCDB" id="3.D.1.6.1">
    <property type="family name" value="the h+ or na+-translocating nadh dehydrogenase (ndh) family"/>
</dbReference>
<dbReference type="PaxDb" id="9913-ENSBTAP00000029003"/>
<dbReference type="Ensembl" id="ENSBTAT00000029003.5">
    <property type="protein sequence ID" value="ENSBTAP00000029003.4"/>
    <property type="gene ID" value="ENSBTAG00000021759.7"/>
</dbReference>
<dbReference type="GeneID" id="327713"/>
<dbReference type="KEGG" id="bta:327713"/>
<dbReference type="CTD" id="4708"/>
<dbReference type="VEuPathDB" id="HostDB:ENSBTAG00000021759"/>
<dbReference type="VGNC" id="VGNC:31962">
    <property type="gene designation" value="NDUFB2"/>
</dbReference>
<dbReference type="eggNOG" id="ENOG502S524">
    <property type="taxonomic scope" value="Eukaryota"/>
</dbReference>
<dbReference type="GeneTree" id="ENSGT00390000004044"/>
<dbReference type="HOGENOM" id="CLU_177133_1_0_1"/>
<dbReference type="InParanoid" id="Q02374"/>
<dbReference type="OMA" id="HLWHDPD"/>
<dbReference type="OrthoDB" id="6241903at2759"/>
<dbReference type="TreeFam" id="TF316619"/>
<dbReference type="Reactome" id="R-BTA-611105">
    <property type="pathway name" value="Respiratory electron transport"/>
</dbReference>
<dbReference type="Reactome" id="R-BTA-6799198">
    <property type="pathway name" value="Complex I biogenesis"/>
</dbReference>
<dbReference type="Proteomes" id="UP000009136">
    <property type="component" value="Chromosome 4"/>
</dbReference>
<dbReference type="Bgee" id="ENSBTAG00000021759">
    <property type="expression patterns" value="Expressed in spermatocyte and 108 other cell types or tissues"/>
</dbReference>
<dbReference type="GO" id="GO:0005743">
    <property type="term" value="C:mitochondrial inner membrane"/>
    <property type="evidence" value="ECO:0007669"/>
    <property type="project" value="UniProtKB-SubCell"/>
</dbReference>
<dbReference type="GO" id="GO:0005739">
    <property type="term" value="C:mitochondrion"/>
    <property type="evidence" value="ECO:0000305"/>
    <property type="project" value="UniProtKB"/>
</dbReference>
<dbReference type="GO" id="GO:0045271">
    <property type="term" value="C:respiratory chain complex I"/>
    <property type="evidence" value="ECO:0000314"/>
    <property type="project" value="UniProtKB"/>
</dbReference>
<dbReference type="GO" id="GO:0032981">
    <property type="term" value="P:mitochondrial respiratory chain complex I assembly"/>
    <property type="evidence" value="ECO:0000318"/>
    <property type="project" value="GO_Central"/>
</dbReference>
<dbReference type="InterPro" id="IPR026627">
    <property type="entry name" value="NDUFB2_animal"/>
</dbReference>
<dbReference type="PANTHER" id="PTHR15223:SF1">
    <property type="entry name" value="NADH DEHYDROGENASE [UBIQUINONE] 1 BETA SUBCOMPLEX SUBUNIT 2, MITOCHONDRIAL"/>
    <property type="match status" value="1"/>
</dbReference>
<dbReference type="PANTHER" id="PTHR15223">
    <property type="entry name" value="NADH-UBIQUINONE OXIDOREDUCTASE AGGG SUBUNIT"/>
    <property type="match status" value="1"/>
</dbReference>
<dbReference type="Pfam" id="PF14813">
    <property type="entry name" value="NADH_B2"/>
    <property type="match status" value="1"/>
</dbReference>
<proteinExistence type="evidence at protein level"/>
<keyword id="KW-0002">3D-structure</keyword>
<keyword id="KW-0903">Direct protein sequencing</keyword>
<keyword id="KW-0249">Electron transport</keyword>
<keyword id="KW-0472">Membrane</keyword>
<keyword id="KW-0496">Mitochondrion</keyword>
<keyword id="KW-0999">Mitochondrion inner membrane</keyword>
<keyword id="KW-1185">Reference proteome</keyword>
<keyword id="KW-0679">Respiratory chain</keyword>
<keyword id="KW-0809">Transit peptide</keyword>
<keyword id="KW-0813">Transport</keyword>
<organism>
    <name type="scientific">Bos taurus</name>
    <name type="common">Bovine</name>
    <dbReference type="NCBI Taxonomy" id="9913"/>
    <lineage>
        <taxon>Eukaryota</taxon>
        <taxon>Metazoa</taxon>
        <taxon>Chordata</taxon>
        <taxon>Craniata</taxon>
        <taxon>Vertebrata</taxon>
        <taxon>Euteleostomi</taxon>
        <taxon>Mammalia</taxon>
        <taxon>Eutheria</taxon>
        <taxon>Laurasiatheria</taxon>
        <taxon>Artiodactyla</taxon>
        <taxon>Ruminantia</taxon>
        <taxon>Pecora</taxon>
        <taxon>Bovidae</taxon>
        <taxon>Bovinae</taxon>
        <taxon>Bos</taxon>
    </lineage>
</organism>
<gene>
    <name type="primary">NDUFB2</name>
</gene>
<evidence type="ECO:0000250" key="1">
    <source>
        <dbReference type="UniProtKB" id="O95178"/>
    </source>
</evidence>
<evidence type="ECO:0000256" key="2">
    <source>
        <dbReference type="SAM" id="MobiDB-lite"/>
    </source>
</evidence>
<evidence type="ECO:0000269" key="3">
    <source>
    </source>
</evidence>
<evidence type="ECO:0000269" key="4">
    <source>
    </source>
</evidence>
<evidence type="ECO:0000269" key="5">
    <source>
    </source>
</evidence>
<evidence type="ECO:0000305" key="6"/>
<evidence type="ECO:0000305" key="7">
    <source>
    </source>
</evidence>
<evidence type="ECO:0000305" key="8">
    <source>
    </source>
</evidence>
<evidence type="ECO:0007829" key="9">
    <source>
        <dbReference type="PDB" id="7QSM"/>
    </source>
</evidence>
<accession>Q02374</accession>
<accession>Q32L42</accession>
<protein>
    <recommendedName>
        <fullName>NADH dehydrogenase [ubiquinone] 1 beta subcomplex subunit 2, mitochondrial</fullName>
    </recommendedName>
    <alternativeName>
        <fullName>Complex I-AGGG</fullName>
        <shortName>CI-AGGG</shortName>
    </alternativeName>
    <alternativeName>
        <fullName>NADH-ubiquinone oxidoreductase AGGG subunit</fullName>
    </alternativeName>
</protein>
<feature type="transit peptide" description="Mitochondrion" evidence="4">
    <location>
        <begin position="1"/>
        <end position="36"/>
    </location>
</feature>
<feature type="chain" id="PRO_0000020041" description="NADH dehydrogenase [ubiquinone] 1 beta subcomplex subunit 2, mitochondrial">
    <location>
        <begin position="37"/>
        <end position="108"/>
    </location>
</feature>
<feature type="region of interest" description="Disordered" evidence="2">
    <location>
        <begin position="89"/>
        <end position="108"/>
    </location>
</feature>
<feature type="compositionally biased region" description="Acidic residues" evidence="2">
    <location>
        <begin position="96"/>
        <end position="108"/>
    </location>
</feature>
<feature type="strand" evidence="9">
    <location>
        <begin position="46"/>
        <end position="49"/>
    </location>
</feature>
<feature type="helix" evidence="9">
    <location>
        <begin position="55"/>
        <end position="79"/>
    </location>
</feature>
<feature type="helix" evidence="9">
    <location>
        <begin position="80"/>
        <end position="82"/>
    </location>
</feature>
<feature type="helix" evidence="9">
    <location>
        <begin position="92"/>
        <end position="94"/>
    </location>
</feature>
<feature type="turn" evidence="9">
    <location>
        <begin position="97"/>
        <end position="101"/>
    </location>
</feature>